<comment type="function">
    <text evidence="1">Hydrolyzes ureidoacrylate to form aminoacrylate and carbamate. The carbamate hydrolyzes spontaneously, thereby releasing one of the nitrogen atoms of the pyrimidine ring as ammonia and one of its carbon atoms as CO2.</text>
</comment>
<comment type="catalytic activity">
    <reaction evidence="1">
        <text>(Z)-3-ureidoacrylate + H2O + H(+) = (Z)-3-aminoacrylate + NH4(+) + CO2</text>
        <dbReference type="Rhea" id="RHEA:42624"/>
        <dbReference type="ChEBI" id="CHEBI:15377"/>
        <dbReference type="ChEBI" id="CHEBI:15378"/>
        <dbReference type="ChEBI" id="CHEBI:16526"/>
        <dbReference type="ChEBI" id="CHEBI:28938"/>
        <dbReference type="ChEBI" id="CHEBI:59891"/>
        <dbReference type="ChEBI" id="CHEBI:59894"/>
        <dbReference type="EC" id="3.5.1.110"/>
    </reaction>
</comment>
<comment type="catalytic activity">
    <reaction evidence="1">
        <text>(Z)-3-ureidoacrylate + H2O = (Z)-3-aminoacrylate + carbamate + H(+)</text>
        <dbReference type="Rhea" id="RHEA:31603"/>
        <dbReference type="ChEBI" id="CHEBI:13941"/>
        <dbReference type="ChEBI" id="CHEBI:15377"/>
        <dbReference type="ChEBI" id="CHEBI:15378"/>
        <dbReference type="ChEBI" id="CHEBI:59891"/>
        <dbReference type="ChEBI" id="CHEBI:59894"/>
    </reaction>
</comment>
<comment type="catalytic activity">
    <reaction evidence="1">
        <text>(Z)-2-methylureidoacrylate + H2O + H(+) = (Z)-2-methylaminoacrylate + NH4(+) + CO2</text>
        <dbReference type="Rhea" id="RHEA:42620"/>
        <dbReference type="ChEBI" id="CHEBI:15377"/>
        <dbReference type="ChEBI" id="CHEBI:15378"/>
        <dbReference type="ChEBI" id="CHEBI:16526"/>
        <dbReference type="ChEBI" id="CHEBI:28938"/>
        <dbReference type="ChEBI" id="CHEBI:143783"/>
        <dbReference type="ChEBI" id="CHEBI:145735"/>
        <dbReference type="EC" id="3.5.1.110"/>
    </reaction>
</comment>
<comment type="similarity">
    <text evidence="1">Belongs to the isochorismatase family. RutB subfamily.</text>
</comment>
<feature type="chain" id="PRO_0000402693" description="Ureidoacrylate amidohydrolase RutB">
    <location>
        <begin position="1"/>
        <end position="248"/>
    </location>
</feature>
<feature type="active site" description="Proton acceptor" evidence="1">
    <location>
        <position position="41"/>
    </location>
</feature>
<feature type="active site" evidence="1">
    <location>
        <position position="150"/>
    </location>
</feature>
<feature type="active site" description="Nucleophile" evidence="1">
    <location>
        <position position="183"/>
    </location>
</feature>
<accession>C7CM35</accession>
<proteinExistence type="inferred from homology"/>
<name>RUTB_METED</name>
<organism>
    <name type="scientific">Methylorubrum extorquens (strain DSM 6343 / CIP 106787 / DM4)</name>
    <name type="common">Methylobacterium extorquens</name>
    <dbReference type="NCBI Taxonomy" id="661410"/>
    <lineage>
        <taxon>Bacteria</taxon>
        <taxon>Pseudomonadati</taxon>
        <taxon>Pseudomonadota</taxon>
        <taxon>Alphaproteobacteria</taxon>
        <taxon>Hyphomicrobiales</taxon>
        <taxon>Methylobacteriaceae</taxon>
        <taxon>Methylorubrum</taxon>
    </lineage>
</organism>
<keyword id="KW-0378">Hydrolase</keyword>
<dbReference type="EC" id="3.5.1.110" evidence="1"/>
<dbReference type="EMBL" id="FP103042">
    <property type="protein sequence ID" value="CAX24016.1"/>
    <property type="molecule type" value="Genomic_DNA"/>
</dbReference>
<dbReference type="RefSeq" id="WP_015822304.1">
    <property type="nucleotide sequence ID" value="NC_012988.1"/>
</dbReference>
<dbReference type="SMR" id="C7CM35"/>
<dbReference type="GeneID" id="72989394"/>
<dbReference type="KEGG" id="mdi:METDI2411"/>
<dbReference type="HOGENOM" id="CLU_068979_8_0_5"/>
<dbReference type="Proteomes" id="UP000008070">
    <property type="component" value="Chromosome"/>
</dbReference>
<dbReference type="GO" id="GO:0016811">
    <property type="term" value="F:hydrolase activity, acting on carbon-nitrogen (but not peptide) bonds, in linear amides"/>
    <property type="evidence" value="ECO:0007669"/>
    <property type="project" value="UniProtKB-UniRule"/>
</dbReference>
<dbReference type="GO" id="GO:0019740">
    <property type="term" value="P:nitrogen utilization"/>
    <property type="evidence" value="ECO:0007669"/>
    <property type="project" value="UniProtKB-UniRule"/>
</dbReference>
<dbReference type="GO" id="GO:0006212">
    <property type="term" value="P:uracil catabolic process"/>
    <property type="evidence" value="ECO:0007669"/>
    <property type="project" value="UniProtKB-UniRule"/>
</dbReference>
<dbReference type="CDD" id="cd00431">
    <property type="entry name" value="cysteine_hydrolases"/>
    <property type="match status" value="1"/>
</dbReference>
<dbReference type="Gene3D" id="3.40.50.850">
    <property type="entry name" value="Isochorismatase-like"/>
    <property type="match status" value="1"/>
</dbReference>
<dbReference type="HAMAP" id="MF_00830">
    <property type="entry name" value="RutB"/>
    <property type="match status" value="1"/>
</dbReference>
<dbReference type="InterPro" id="IPR000868">
    <property type="entry name" value="Isochorismatase-like_dom"/>
</dbReference>
<dbReference type="InterPro" id="IPR050272">
    <property type="entry name" value="Isochorismatase-like_hydrls"/>
</dbReference>
<dbReference type="InterPro" id="IPR036380">
    <property type="entry name" value="Isochorismatase-like_sf"/>
</dbReference>
<dbReference type="InterPro" id="IPR019916">
    <property type="entry name" value="RutB"/>
</dbReference>
<dbReference type="NCBIfam" id="TIGR03614">
    <property type="entry name" value="RutB"/>
    <property type="match status" value="1"/>
</dbReference>
<dbReference type="PANTHER" id="PTHR43540:SF6">
    <property type="entry name" value="ISOCHORISMATASE-LIKE DOMAIN-CONTAINING PROTEIN"/>
    <property type="match status" value="1"/>
</dbReference>
<dbReference type="PANTHER" id="PTHR43540">
    <property type="entry name" value="PEROXYUREIDOACRYLATE/UREIDOACRYLATE AMIDOHYDROLASE-RELATED"/>
    <property type="match status" value="1"/>
</dbReference>
<dbReference type="Pfam" id="PF00857">
    <property type="entry name" value="Isochorismatase"/>
    <property type="match status" value="1"/>
</dbReference>
<dbReference type="SUPFAM" id="SSF52499">
    <property type="entry name" value="Isochorismatase-like hydrolases"/>
    <property type="match status" value="1"/>
</dbReference>
<reference key="1">
    <citation type="journal article" date="2009" name="PLoS ONE">
        <title>Methylobacterium genome sequences: a reference blueprint to investigate microbial metabolism of C1 compounds from natural and industrial sources.</title>
        <authorList>
            <person name="Vuilleumier S."/>
            <person name="Chistoserdova L."/>
            <person name="Lee M.-C."/>
            <person name="Bringel F."/>
            <person name="Lajus A."/>
            <person name="Zhou Y."/>
            <person name="Gourion B."/>
            <person name="Barbe V."/>
            <person name="Chang J."/>
            <person name="Cruveiller S."/>
            <person name="Dossat C."/>
            <person name="Gillett W."/>
            <person name="Gruffaz C."/>
            <person name="Haugen E."/>
            <person name="Hourcade E."/>
            <person name="Levy R."/>
            <person name="Mangenot S."/>
            <person name="Muller E."/>
            <person name="Nadalig T."/>
            <person name="Pagni M."/>
            <person name="Penny C."/>
            <person name="Peyraud R."/>
            <person name="Robinson D.G."/>
            <person name="Roche D."/>
            <person name="Rouy Z."/>
            <person name="Saenampechek C."/>
            <person name="Salvignol G."/>
            <person name="Vallenet D."/>
            <person name="Wu Z."/>
            <person name="Marx C.J."/>
            <person name="Vorholt J.A."/>
            <person name="Olson M.V."/>
            <person name="Kaul R."/>
            <person name="Weissenbach J."/>
            <person name="Medigue C."/>
            <person name="Lidstrom M.E."/>
        </authorList>
    </citation>
    <scope>NUCLEOTIDE SEQUENCE [LARGE SCALE GENOMIC DNA]</scope>
    <source>
        <strain>DSM 6343 / CIP 106787 / DM4</strain>
    </source>
</reference>
<evidence type="ECO:0000255" key="1">
    <source>
        <dbReference type="HAMAP-Rule" id="MF_00830"/>
    </source>
</evidence>
<protein>
    <recommendedName>
        <fullName evidence="1">Ureidoacrylate amidohydrolase RutB</fullName>
        <ecNumber evidence="1">3.5.1.110</ecNumber>
    </recommendedName>
</protein>
<gene>
    <name evidence="1" type="primary">rutB</name>
    <name type="ordered locus">METDI2411</name>
</gene>
<sequence length="248" mass="26859">MEADAPAGYRDPSGRHGAVTLPARPEPIAFDADATVLIVVDMQNAYATKGGYLDLAGFDVSATGPVIERIARAVAAARAAGIRVVWFQNGWDPDYVEAGGPGSPNWHKSNALKTMRRRPEMNQRLLAKGTWDYALVDALTPEPGDIVLPKPRYSGFYNTPLDSMLRARGIRTLVFTGIATNVCVESTLRDGYHREYFGIVLADATHQAGPPALQEGALRNIETFFGWVSDVAAFEAALSSDEARRIPA</sequence>